<comment type="function">
    <text evidence="1">Required for the development of soma-targeting inhibitory GABAergic synapses made by parvalbumin-positive basket cells.</text>
</comment>
<comment type="subcellular location">
    <subcellularLocation>
        <location evidence="5">Secreted</location>
    </subcellularLocation>
</comment>
<comment type="tissue specificity">
    <text evidence="4">Brain, heart and placenta.</text>
</comment>
<comment type="sequence caution" evidence="5">
    <conflict type="erroneous initiation">
        <sequence resource="EMBL-CDS" id="BAA91746"/>
    </conflict>
</comment>
<dbReference type="EMBL" id="AF467955">
    <property type="protein sequence ID" value="AAM49553.1"/>
    <property type="molecule type" value="mRNA"/>
</dbReference>
<dbReference type="EMBL" id="AJ487958">
    <property type="protein sequence ID" value="CAD32305.1"/>
    <property type="molecule type" value="mRNA"/>
</dbReference>
<dbReference type="EMBL" id="AJ487516">
    <property type="protein sequence ID" value="CAD31784.1"/>
    <property type="molecule type" value="mRNA"/>
</dbReference>
<dbReference type="EMBL" id="BC101759">
    <property type="protein sequence ID" value="AAI01760.1"/>
    <property type="molecule type" value="mRNA"/>
</dbReference>
<dbReference type="EMBL" id="BC101761">
    <property type="protein sequence ID" value="AAI01762.1"/>
    <property type="molecule type" value="mRNA"/>
</dbReference>
<dbReference type="EMBL" id="AB067503">
    <property type="protein sequence ID" value="BAB67809.1"/>
    <property type="molecule type" value="mRNA"/>
</dbReference>
<dbReference type="EMBL" id="AK001537">
    <property type="protein sequence ID" value="BAA91746.1"/>
    <property type="status" value="ALT_INIT"/>
    <property type="molecule type" value="mRNA"/>
</dbReference>
<dbReference type="CCDS" id="CCDS3431.1"/>
<dbReference type="RefSeq" id="NP_060646.2">
    <property type="nucleotide sequence ID" value="NM_018176.3"/>
</dbReference>
<dbReference type="SMR" id="Q8N0V4"/>
<dbReference type="BioGRID" id="120499">
    <property type="interactions" value="9"/>
</dbReference>
<dbReference type="FunCoup" id="Q8N0V4">
    <property type="interactions" value="174"/>
</dbReference>
<dbReference type="IntAct" id="Q8N0V4">
    <property type="interactions" value="4"/>
</dbReference>
<dbReference type="MINT" id="Q8N0V4"/>
<dbReference type="STRING" id="9606.ENSP00000371548"/>
<dbReference type="GlyCosmos" id="Q8N0V4">
    <property type="glycosylation" value="4 sites, No reported glycans"/>
</dbReference>
<dbReference type="GlyGen" id="Q8N0V4">
    <property type="glycosylation" value="4 sites, 1 N-linked glycan (1 site)"/>
</dbReference>
<dbReference type="iPTMnet" id="Q8N0V4"/>
<dbReference type="PhosphoSitePlus" id="Q8N0V4"/>
<dbReference type="BioMuta" id="LGI2"/>
<dbReference type="DMDM" id="32469740"/>
<dbReference type="REPRODUCTION-2DPAGE" id="Q8N0V4"/>
<dbReference type="MassIVE" id="Q8N0V4"/>
<dbReference type="PaxDb" id="9606-ENSP00000371548"/>
<dbReference type="PeptideAtlas" id="Q8N0V4"/>
<dbReference type="ProteomicsDB" id="71467"/>
<dbReference type="Antibodypedia" id="2543">
    <property type="antibodies" value="141 antibodies from 31 providers"/>
</dbReference>
<dbReference type="DNASU" id="55203"/>
<dbReference type="Ensembl" id="ENST00000382114.9">
    <property type="protein sequence ID" value="ENSP00000371548.4"/>
    <property type="gene ID" value="ENSG00000153012.12"/>
</dbReference>
<dbReference type="GeneID" id="55203"/>
<dbReference type="KEGG" id="hsa:55203"/>
<dbReference type="MANE-Select" id="ENST00000382114.9">
    <property type="protein sequence ID" value="ENSP00000371548.4"/>
    <property type="RefSeq nucleotide sequence ID" value="NM_018176.4"/>
    <property type="RefSeq protein sequence ID" value="NP_060646.2"/>
</dbReference>
<dbReference type="UCSC" id="uc003grf.3">
    <property type="organism name" value="human"/>
</dbReference>
<dbReference type="AGR" id="HGNC:18710"/>
<dbReference type="CTD" id="55203"/>
<dbReference type="DisGeNET" id="55203"/>
<dbReference type="GeneCards" id="LGI2"/>
<dbReference type="HGNC" id="HGNC:18710">
    <property type="gene designation" value="LGI2"/>
</dbReference>
<dbReference type="HPA" id="ENSG00000153012">
    <property type="expression patterns" value="Tissue enriched (parathyroid)"/>
</dbReference>
<dbReference type="MIM" id="608301">
    <property type="type" value="gene"/>
</dbReference>
<dbReference type="neXtProt" id="NX_Q8N0V4"/>
<dbReference type="OpenTargets" id="ENSG00000153012"/>
<dbReference type="PharmGKB" id="PA38654"/>
<dbReference type="VEuPathDB" id="HostDB:ENSG00000153012"/>
<dbReference type="eggNOG" id="ENOG502QR53">
    <property type="taxonomic scope" value="Eukaryota"/>
</dbReference>
<dbReference type="GeneTree" id="ENSGT00940000157294"/>
<dbReference type="HOGENOM" id="CLU_036403_0_0_1"/>
<dbReference type="InParanoid" id="Q8N0V4"/>
<dbReference type="OMA" id="CWRESAL"/>
<dbReference type="OrthoDB" id="6066926at2759"/>
<dbReference type="PAN-GO" id="Q8N0V4">
    <property type="GO annotations" value="1 GO annotation based on evolutionary models"/>
</dbReference>
<dbReference type="PhylomeDB" id="Q8N0V4"/>
<dbReference type="TreeFam" id="TF333155"/>
<dbReference type="PathwayCommons" id="Q8N0V4"/>
<dbReference type="Reactome" id="R-HSA-5682910">
    <property type="pathway name" value="LGI-ADAM interactions"/>
</dbReference>
<dbReference type="SignaLink" id="Q8N0V4"/>
<dbReference type="BioGRID-ORCS" id="55203">
    <property type="hits" value="12 hits in 1144 CRISPR screens"/>
</dbReference>
<dbReference type="ChiTaRS" id="LGI2">
    <property type="organism name" value="human"/>
</dbReference>
<dbReference type="GeneWiki" id="LGI2"/>
<dbReference type="GenomeRNAi" id="55203"/>
<dbReference type="Pharos" id="Q8N0V4">
    <property type="development level" value="Tbio"/>
</dbReference>
<dbReference type="PRO" id="PR:Q8N0V4"/>
<dbReference type="Proteomes" id="UP000005640">
    <property type="component" value="Chromosome 4"/>
</dbReference>
<dbReference type="RNAct" id="Q8N0V4">
    <property type="molecule type" value="protein"/>
</dbReference>
<dbReference type="Bgee" id="ENSG00000153012">
    <property type="expression patterns" value="Expressed in smooth muscle tissue and 150 other cell types or tissues"/>
</dbReference>
<dbReference type="ExpressionAtlas" id="Q8N0V4">
    <property type="expression patterns" value="baseline and differential"/>
</dbReference>
<dbReference type="GO" id="GO:0005576">
    <property type="term" value="C:extracellular region"/>
    <property type="evidence" value="ECO:0000304"/>
    <property type="project" value="Reactome"/>
</dbReference>
<dbReference type="GO" id="GO:1904862">
    <property type="term" value="P:inhibitory synapse assembly"/>
    <property type="evidence" value="ECO:0000250"/>
    <property type="project" value="UniProtKB"/>
</dbReference>
<dbReference type="FunFam" id="3.80.10.10:FF:000017">
    <property type="entry name" value="leucine-rich repeat LGI family member 3"/>
    <property type="match status" value="1"/>
</dbReference>
<dbReference type="Gene3D" id="3.80.10.10">
    <property type="entry name" value="Ribonuclease Inhibitor"/>
    <property type="match status" value="1"/>
</dbReference>
<dbReference type="InterPro" id="IPR000483">
    <property type="entry name" value="Cys-rich_flank_reg_C"/>
</dbReference>
<dbReference type="InterPro" id="IPR009039">
    <property type="entry name" value="EAR"/>
</dbReference>
<dbReference type="InterPro" id="IPR005492">
    <property type="entry name" value="EPTP"/>
</dbReference>
<dbReference type="InterPro" id="IPR001611">
    <property type="entry name" value="Leu-rich_rpt"/>
</dbReference>
<dbReference type="InterPro" id="IPR003591">
    <property type="entry name" value="Leu-rich_rpt_typical-subtyp"/>
</dbReference>
<dbReference type="InterPro" id="IPR051295">
    <property type="entry name" value="LGI_related"/>
</dbReference>
<dbReference type="InterPro" id="IPR032675">
    <property type="entry name" value="LRR_dom_sf"/>
</dbReference>
<dbReference type="PANTHER" id="PTHR24367:SF21">
    <property type="entry name" value="LEUCINE-RICH REPEAT LGI FAMILY MEMBER 2"/>
    <property type="match status" value="1"/>
</dbReference>
<dbReference type="PANTHER" id="PTHR24367">
    <property type="entry name" value="LEUCINE-RICH REPEAT-CONTAINING PROTEIN"/>
    <property type="match status" value="1"/>
</dbReference>
<dbReference type="Pfam" id="PF03736">
    <property type="entry name" value="EPTP"/>
    <property type="match status" value="7"/>
</dbReference>
<dbReference type="Pfam" id="PF13855">
    <property type="entry name" value="LRR_8"/>
    <property type="match status" value="1"/>
</dbReference>
<dbReference type="SMART" id="SM00369">
    <property type="entry name" value="LRR_TYP"/>
    <property type="match status" value="3"/>
</dbReference>
<dbReference type="SMART" id="SM00082">
    <property type="entry name" value="LRRCT"/>
    <property type="match status" value="1"/>
</dbReference>
<dbReference type="SUPFAM" id="SSF52058">
    <property type="entry name" value="L domain-like"/>
    <property type="match status" value="1"/>
</dbReference>
<dbReference type="SUPFAM" id="SSF101908">
    <property type="entry name" value="Putative isomerase YbhE"/>
    <property type="match status" value="1"/>
</dbReference>
<dbReference type="PROSITE" id="PS50912">
    <property type="entry name" value="EAR"/>
    <property type="match status" value="7"/>
</dbReference>
<sequence>MALRRGGCGALGLLLLLLGAACLIPRSAQVRRLARCPATCSCTKESIICVGSSWVPRIVPGDISSLSLVNGTFSEIKDRMFSHLPSLQLLLLNSNSFTIIRDDAFAGLFHLEYLFIEGNKIETISRNAFRGLRDLTHLSLANNHIKALPRDVFSDLDSLIELDLRGNKFECDCKAKWLYLWLKMTNSTVSDVLCIGPPEYQEKKLNDVTSFDYECTTTDFVVHQTLPYQSVSVDTFNSKNDVYVAIAQPSMENCMVLEWDHIEMNFRSYDNITGQSIVGCKAILIDDQVFVVVAQLFGGSHIYKYDESWTKFVKFQDIEVSRISKPNDIELFQIDDETFFVIADSSKAGLSTVYKWNSKGFYSYQSLHEWFRDTDAEFVDIDGKSHLILSSRSQVPIILQWNKSSKKFVPHGDIPNMEDVLAVKSFRMQNTLYLSLTRFIGDSRVMRWNSKQFVEIQALPSRGAMTLQPFSFKDNHYLALGSDYTFSQIYQWDKEKQLFKKFKEIYVQAPRSFTAVSTDRRDFFFASSFKGKTKIFEHIIVDLSL</sequence>
<organism>
    <name type="scientific">Homo sapiens</name>
    <name type="common">Human</name>
    <dbReference type="NCBI Taxonomy" id="9606"/>
    <lineage>
        <taxon>Eukaryota</taxon>
        <taxon>Metazoa</taxon>
        <taxon>Chordata</taxon>
        <taxon>Craniata</taxon>
        <taxon>Vertebrata</taxon>
        <taxon>Euteleostomi</taxon>
        <taxon>Mammalia</taxon>
        <taxon>Eutheria</taxon>
        <taxon>Euarchontoglires</taxon>
        <taxon>Primates</taxon>
        <taxon>Haplorrhini</taxon>
        <taxon>Catarrhini</taxon>
        <taxon>Hominidae</taxon>
        <taxon>Homo</taxon>
    </lineage>
</organism>
<proteinExistence type="evidence at protein level"/>
<feature type="signal peptide" evidence="2">
    <location>
        <begin position="1"/>
        <end position="28"/>
    </location>
</feature>
<feature type="chain" id="PRO_0000017708" description="Leucine-rich repeat LGI family member 2">
    <location>
        <begin position="29"/>
        <end position="545"/>
    </location>
</feature>
<feature type="domain" description="LRRNT">
    <location>
        <begin position="29"/>
        <end position="65"/>
    </location>
</feature>
<feature type="repeat" description="LRR 1">
    <location>
        <begin position="86"/>
        <end position="107"/>
    </location>
</feature>
<feature type="repeat" description="LRR 2">
    <location>
        <begin position="110"/>
        <end position="131"/>
    </location>
</feature>
<feature type="repeat" description="LRR 3">
    <location>
        <begin position="134"/>
        <end position="155"/>
    </location>
</feature>
<feature type="domain" description="LRRCT">
    <location>
        <begin position="167"/>
        <end position="217"/>
    </location>
</feature>
<feature type="repeat" description="EAR 1" evidence="3">
    <location>
        <begin position="219"/>
        <end position="261"/>
    </location>
</feature>
<feature type="repeat" description="EAR 2" evidence="3">
    <location>
        <begin position="265"/>
        <end position="307"/>
    </location>
</feature>
<feature type="repeat" description="EAR 3" evidence="3">
    <location>
        <begin position="311"/>
        <end position="358"/>
    </location>
</feature>
<feature type="repeat" description="EAR 4" evidence="3">
    <location>
        <begin position="360"/>
        <end position="403"/>
    </location>
</feature>
<feature type="repeat" description="EAR 5" evidence="3">
    <location>
        <begin position="407"/>
        <end position="450"/>
    </location>
</feature>
<feature type="repeat" description="EAR 6" evidence="3">
    <location>
        <begin position="452"/>
        <end position="494"/>
    </location>
</feature>
<feature type="repeat" description="EAR 7" evidence="3">
    <location>
        <begin position="498"/>
        <end position="540"/>
    </location>
</feature>
<feature type="glycosylation site" description="N-linked (GlcNAc...) asparagine" evidence="2">
    <location>
        <position position="70"/>
    </location>
</feature>
<feature type="glycosylation site" description="N-linked (GlcNAc...) asparagine" evidence="2">
    <location>
        <position position="186"/>
    </location>
</feature>
<feature type="glycosylation site" description="N-linked (GlcNAc...) asparagine" evidence="2">
    <location>
        <position position="271"/>
    </location>
</feature>
<feature type="glycosylation site" description="N-linked (GlcNAc...) asparagine" evidence="2">
    <location>
        <position position="402"/>
    </location>
</feature>
<feature type="sequence variant" id="VAR_030536" description="In dbSNP:rs2232026.">
    <original>R</original>
    <variation>Q</variation>
    <location>
        <position position="444"/>
    </location>
</feature>
<feature type="sequence variant" id="VAR_030537" description="In dbSNP:rs2232027.">
    <original>Q</original>
    <variation>R</variation>
    <location>
        <position position="452"/>
    </location>
</feature>
<feature type="sequence conflict" description="In Ref. 2; CAD32305 and 5; BAB67809." evidence="5" ref="2 5">
    <original>F</original>
    <variation>L</variation>
    <location>
        <position position="524"/>
    </location>
</feature>
<name>LGI2_HUMAN</name>
<evidence type="ECO:0000250" key="1">
    <source>
        <dbReference type="UniProtKB" id="Q8K4Z0"/>
    </source>
</evidence>
<evidence type="ECO:0000255" key="2"/>
<evidence type="ECO:0000255" key="3">
    <source>
        <dbReference type="PROSITE-ProRule" id="PRU00075"/>
    </source>
</evidence>
<evidence type="ECO:0000269" key="4">
    <source>
    </source>
</evidence>
<evidence type="ECO:0000305" key="5"/>
<protein>
    <recommendedName>
        <fullName>Leucine-rich repeat LGI family member 2</fullName>
    </recommendedName>
    <alternativeName>
        <fullName>LGI1-like protein 2</fullName>
    </alternativeName>
    <alternativeName>
        <fullName>Leucine-rich glioma-inactivated protein 2</fullName>
    </alternativeName>
</protein>
<keyword id="KW-0325">Glycoprotein</keyword>
<keyword id="KW-0433">Leucine-rich repeat</keyword>
<keyword id="KW-1267">Proteomics identification</keyword>
<keyword id="KW-1185">Reference proteome</keyword>
<keyword id="KW-0677">Repeat</keyword>
<keyword id="KW-0964">Secreted</keyword>
<keyword id="KW-0732">Signal</keyword>
<reference key="1">
    <citation type="journal article" date="2002" name="FEBS Lett.">
        <title>The LGI1 gene involved in lateral temporal lobe epilepsy belongs to a new subfamily of leucine-rich repeat proteins.</title>
        <authorList>
            <person name="Gu W."/>
            <person name="Wevers A."/>
            <person name="Schroder H."/>
            <person name="Grzeschik K.H."/>
            <person name="Derst C."/>
            <person name="Brodtkorb E."/>
            <person name="de Vos R."/>
            <person name="Steinlein O.K."/>
        </authorList>
    </citation>
    <scope>NUCLEOTIDE SEQUENCE [MRNA]</scope>
    <scope>TISSUE SPECIFICITY</scope>
</reference>
<reference key="2">
    <citation type="journal article" date="2002" name="Hum. Mol. Genet.">
        <title>A common protein interaction domain links two recently identified epilepsy genes.</title>
        <authorList>
            <person name="Scheel H."/>
            <person name="Tomiuk S."/>
            <person name="Hofmann K."/>
        </authorList>
    </citation>
    <scope>NUCLEOTIDE SEQUENCE [MRNA]</scope>
</reference>
<reference key="3">
    <citation type="journal article" date="2002" name="Trends Biochem. Sci.">
        <title>The novel EPTP repeat defines a superfamily of proteins implicated in epileptic disorders.</title>
        <authorList>
            <person name="Staub E."/>
            <person name="Perez-Tur J."/>
            <person name="Siebert R."/>
            <person name="Nobile C."/>
            <person name="Moschonas N.K."/>
            <person name="Deloukas P."/>
            <person name="Hinzmann B."/>
        </authorList>
    </citation>
    <scope>NUCLEOTIDE SEQUENCE [MRNA]</scope>
</reference>
<reference key="4">
    <citation type="journal article" date="2004" name="Genome Res.">
        <title>The status, quality, and expansion of the NIH full-length cDNA project: the Mammalian Gene Collection (MGC).</title>
        <authorList>
            <consortium name="The MGC Project Team"/>
        </authorList>
    </citation>
    <scope>NUCLEOTIDE SEQUENCE [LARGE SCALE MRNA]</scope>
    <source>
        <tissue>Brain</tissue>
    </source>
</reference>
<reference key="5">
    <citation type="journal article" date="2001" name="DNA Res.">
        <title>Prediction of the coding sequences of unidentified human genes. XXI. The complete sequences of 60 new cDNA clones from brain which code for large proteins.</title>
        <authorList>
            <person name="Nagase T."/>
            <person name="Kikuno R."/>
            <person name="Ohara O."/>
        </authorList>
    </citation>
    <scope>NUCLEOTIDE SEQUENCE [LARGE SCALE MRNA] OF 4-545</scope>
    <source>
        <tissue>Brain</tissue>
    </source>
</reference>
<reference key="6">
    <citation type="journal article" date="2004" name="Nat. Genet.">
        <title>Complete sequencing and characterization of 21,243 full-length human cDNAs.</title>
        <authorList>
            <person name="Ota T."/>
            <person name="Suzuki Y."/>
            <person name="Nishikawa T."/>
            <person name="Otsuki T."/>
            <person name="Sugiyama T."/>
            <person name="Irie R."/>
            <person name="Wakamatsu A."/>
            <person name="Hayashi K."/>
            <person name="Sato H."/>
            <person name="Nagai K."/>
            <person name="Kimura K."/>
            <person name="Makita H."/>
            <person name="Sekine M."/>
            <person name="Obayashi M."/>
            <person name="Nishi T."/>
            <person name="Shibahara T."/>
            <person name="Tanaka T."/>
            <person name="Ishii S."/>
            <person name="Yamamoto J."/>
            <person name="Saito K."/>
            <person name="Kawai Y."/>
            <person name="Isono Y."/>
            <person name="Nakamura Y."/>
            <person name="Nagahari K."/>
            <person name="Murakami K."/>
            <person name="Yasuda T."/>
            <person name="Iwayanagi T."/>
            <person name="Wagatsuma M."/>
            <person name="Shiratori A."/>
            <person name="Sudo H."/>
            <person name="Hosoiri T."/>
            <person name="Kaku Y."/>
            <person name="Kodaira H."/>
            <person name="Kondo H."/>
            <person name="Sugawara M."/>
            <person name="Takahashi M."/>
            <person name="Kanda K."/>
            <person name="Yokoi T."/>
            <person name="Furuya T."/>
            <person name="Kikkawa E."/>
            <person name="Omura Y."/>
            <person name="Abe K."/>
            <person name="Kamihara K."/>
            <person name="Katsuta N."/>
            <person name="Sato K."/>
            <person name="Tanikawa M."/>
            <person name="Yamazaki M."/>
            <person name="Ninomiya K."/>
            <person name="Ishibashi T."/>
            <person name="Yamashita H."/>
            <person name="Murakawa K."/>
            <person name="Fujimori K."/>
            <person name="Tanai H."/>
            <person name="Kimata M."/>
            <person name="Watanabe M."/>
            <person name="Hiraoka S."/>
            <person name="Chiba Y."/>
            <person name="Ishida S."/>
            <person name="Ono Y."/>
            <person name="Takiguchi S."/>
            <person name="Watanabe S."/>
            <person name="Yosida M."/>
            <person name="Hotuta T."/>
            <person name="Kusano J."/>
            <person name="Kanehori K."/>
            <person name="Takahashi-Fujii A."/>
            <person name="Hara H."/>
            <person name="Tanase T.-O."/>
            <person name="Nomura Y."/>
            <person name="Togiya S."/>
            <person name="Komai F."/>
            <person name="Hara R."/>
            <person name="Takeuchi K."/>
            <person name="Arita M."/>
            <person name="Imose N."/>
            <person name="Musashino K."/>
            <person name="Yuuki H."/>
            <person name="Oshima A."/>
            <person name="Sasaki N."/>
            <person name="Aotsuka S."/>
            <person name="Yoshikawa Y."/>
            <person name="Matsunawa H."/>
            <person name="Ichihara T."/>
            <person name="Shiohata N."/>
            <person name="Sano S."/>
            <person name="Moriya S."/>
            <person name="Momiyama H."/>
            <person name="Satoh N."/>
            <person name="Takami S."/>
            <person name="Terashima Y."/>
            <person name="Suzuki O."/>
            <person name="Nakagawa S."/>
            <person name="Senoh A."/>
            <person name="Mizoguchi H."/>
            <person name="Goto Y."/>
            <person name="Shimizu F."/>
            <person name="Wakebe H."/>
            <person name="Hishigaki H."/>
            <person name="Watanabe T."/>
            <person name="Sugiyama A."/>
            <person name="Takemoto M."/>
            <person name="Kawakami B."/>
            <person name="Yamazaki M."/>
            <person name="Watanabe K."/>
            <person name="Kumagai A."/>
            <person name="Itakura S."/>
            <person name="Fukuzumi Y."/>
            <person name="Fujimori Y."/>
            <person name="Komiyama M."/>
            <person name="Tashiro H."/>
            <person name="Tanigami A."/>
            <person name="Fujiwara T."/>
            <person name="Ono T."/>
            <person name="Yamada K."/>
            <person name="Fujii Y."/>
            <person name="Ozaki K."/>
            <person name="Hirao M."/>
            <person name="Ohmori Y."/>
            <person name="Kawabata A."/>
            <person name="Hikiji T."/>
            <person name="Kobatake N."/>
            <person name="Inagaki H."/>
            <person name="Ikema Y."/>
            <person name="Okamoto S."/>
            <person name="Okitani R."/>
            <person name="Kawakami T."/>
            <person name="Noguchi S."/>
            <person name="Itoh T."/>
            <person name="Shigeta K."/>
            <person name="Senba T."/>
            <person name="Matsumura K."/>
            <person name="Nakajima Y."/>
            <person name="Mizuno T."/>
            <person name="Morinaga M."/>
            <person name="Sasaki M."/>
            <person name="Togashi T."/>
            <person name="Oyama M."/>
            <person name="Hata H."/>
            <person name="Watanabe M."/>
            <person name="Komatsu T."/>
            <person name="Mizushima-Sugano J."/>
            <person name="Satoh T."/>
            <person name="Shirai Y."/>
            <person name="Takahashi Y."/>
            <person name="Nakagawa K."/>
            <person name="Okumura K."/>
            <person name="Nagase T."/>
            <person name="Nomura N."/>
            <person name="Kikuchi H."/>
            <person name="Masuho Y."/>
            <person name="Yamashita R."/>
            <person name="Nakai K."/>
            <person name="Yada T."/>
            <person name="Nakamura Y."/>
            <person name="Ohara O."/>
            <person name="Isogai T."/>
            <person name="Sugano S."/>
        </authorList>
    </citation>
    <scope>NUCLEOTIDE SEQUENCE [LARGE SCALE MRNA] OF 322-545</scope>
</reference>
<gene>
    <name type="primary">LGI2</name>
    <name type="synonym">KIAA1916</name>
    <name type="synonym">LGIL2</name>
</gene>
<accession>Q8N0V4</accession>
<accession>Q3MIN2</accession>
<accession>Q8NDW6</accession>
<accession>Q96PX2</accession>
<accession>Q9NVK4</accession>